<comment type="function">
    <text evidence="1">Catalyzes the formation of 4-diphosphocytidyl-2-C-methyl-D-erythritol from CTP and 2-C-methyl-D-erythritol 4-phosphate (MEP).</text>
</comment>
<comment type="catalytic activity">
    <reaction evidence="1">
        <text>2-C-methyl-D-erythritol 4-phosphate + CTP + H(+) = 4-CDP-2-C-methyl-D-erythritol + diphosphate</text>
        <dbReference type="Rhea" id="RHEA:13429"/>
        <dbReference type="ChEBI" id="CHEBI:15378"/>
        <dbReference type="ChEBI" id="CHEBI:33019"/>
        <dbReference type="ChEBI" id="CHEBI:37563"/>
        <dbReference type="ChEBI" id="CHEBI:57823"/>
        <dbReference type="ChEBI" id="CHEBI:58262"/>
        <dbReference type="EC" id="2.7.7.60"/>
    </reaction>
</comment>
<comment type="pathway">
    <text evidence="1">Isoprenoid biosynthesis; isopentenyl diphosphate biosynthesis via DXP pathway; isopentenyl diphosphate from 1-deoxy-D-xylulose 5-phosphate: step 2/6.</text>
</comment>
<comment type="similarity">
    <text evidence="1">Belongs to the IspD/TarI cytidylyltransferase family. IspD subfamily.</text>
</comment>
<name>ISPD_CHLFF</name>
<accession>Q253C1</accession>
<protein>
    <recommendedName>
        <fullName evidence="1">2-C-methyl-D-erythritol 4-phosphate cytidylyltransferase</fullName>
        <ecNumber evidence="1">2.7.7.60</ecNumber>
    </recommendedName>
    <alternativeName>
        <fullName evidence="1">4-diphosphocytidyl-2C-methyl-D-erythritol synthase</fullName>
    </alternativeName>
    <alternativeName>
        <fullName evidence="1">MEP cytidylyltransferase</fullName>
        <shortName evidence="1">MCT</shortName>
    </alternativeName>
</protein>
<keyword id="KW-0414">Isoprene biosynthesis</keyword>
<keyword id="KW-0548">Nucleotidyltransferase</keyword>
<keyword id="KW-0808">Transferase</keyword>
<proteinExistence type="inferred from homology"/>
<organism>
    <name type="scientific">Chlamydia felis (strain Fe/C-56)</name>
    <name type="common">Chlamydophila felis</name>
    <dbReference type="NCBI Taxonomy" id="264202"/>
    <lineage>
        <taxon>Bacteria</taxon>
        <taxon>Pseudomonadati</taxon>
        <taxon>Chlamydiota</taxon>
        <taxon>Chlamydiia</taxon>
        <taxon>Chlamydiales</taxon>
        <taxon>Chlamydiaceae</taxon>
        <taxon>Chlamydia/Chlamydophila group</taxon>
        <taxon>Chlamydia</taxon>
    </lineage>
</organism>
<sequence length="212" mass="23420">MNPKCSLILLSGGKGERFGANQPKQYLPFQGQPLILHALNSALLIPEINEIIVVCDASYEHIFEGYSVKFAPAGMRRQDSVFSGLHHVTNPWVLVHDGVRPFIYPDEVSELIVIAQQTGAATLVSNVPYTIKQRNPVKTLDRDSLSIVHTPQCIKTEILLEGLELADREQITLVDDTQAAELLGIPVSLVSNKHPQIKITYPEDLTIAHALL</sequence>
<feature type="chain" id="PRO_1000022912" description="2-C-methyl-D-erythritol 4-phosphate cytidylyltransferase">
    <location>
        <begin position="1"/>
        <end position="212"/>
    </location>
</feature>
<feature type="site" description="Transition state stabilizer" evidence="1">
    <location>
        <position position="17"/>
    </location>
</feature>
<feature type="site" description="Transition state stabilizer" evidence="1">
    <location>
        <position position="24"/>
    </location>
</feature>
<feature type="site" description="Positions MEP for the nucleophilic attack" evidence="1">
    <location>
        <position position="142"/>
    </location>
</feature>
<feature type="site" description="Positions MEP for the nucleophilic attack" evidence="1">
    <location>
        <position position="198"/>
    </location>
</feature>
<dbReference type="EC" id="2.7.7.60" evidence="1"/>
<dbReference type="EMBL" id="AP006861">
    <property type="protein sequence ID" value="BAE81617.1"/>
    <property type="molecule type" value="Genomic_DNA"/>
</dbReference>
<dbReference type="RefSeq" id="WP_011458392.1">
    <property type="nucleotide sequence ID" value="NC_007899.1"/>
</dbReference>
<dbReference type="SMR" id="Q253C1"/>
<dbReference type="STRING" id="264202.CF0845"/>
<dbReference type="KEGG" id="cfe:CF0845"/>
<dbReference type="eggNOG" id="COG1211">
    <property type="taxonomic scope" value="Bacteria"/>
</dbReference>
<dbReference type="HOGENOM" id="CLU_061281_2_2_0"/>
<dbReference type="UniPathway" id="UPA00056">
    <property type="reaction ID" value="UER00093"/>
</dbReference>
<dbReference type="Proteomes" id="UP000001260">
    <property type="component" value="Chromosome"/>
</dbReference>
<dbReference type="GO" id="GO:0050518">
    <property type="term" value="F:2-C-methyl-D-erythritol 4-phosphate cytidylyltransferase activity"/>
    <property type="evidence" value="ECO:0007669"/>
    <property type="project" value="UniProtKB-UniRule"/>
</dbReference>
<dbReference type="GO" id="GO:0019288">
    <property type="term" value="P:isopentenyl diphosphate biosynthetic process, methylerythritol 4-phosphate pathway"/>
    <property type="evidence" value="ECO:0007669"/>
    <property type="project" value="UniProtKB-UniRule"/>
</dbReference>
<dbReference type="CDD" id="cd02516">
    <property type="entry name" value="CDP-ME_synthetase"/>
    <property type="match status" value="1"/>
</dbReference>
<dbReference type="Gene3D" id="3.90.550.10">
    <property type="entry name" value="Spore Coat Polysaccharide Biosynthesis Protein SpsA, Chain A"/>
    <property type="match status" value="1"/>
</dbReference>
<dbReference type="HAMAP" id="MF_00108">
    <property type="entry name" value="IspD"/>
    <property type="match status" value="1"/>
</dbReference>
<dbReference type="InterPro" id="IPR001228">
    <property type="entry name" value="IspD"/>
</dbReference>
<dbReference type="InterPro" id="IPR034683">
    <property type="entry name" value="IspD/TarI"/>
</dbReference>
<dbReference type="InterPro" id="IPR050088">
    <property type="entry name" value="IspD/TarI_cytidylyltransf_bact"/>
</dbReference>
<dbReference type="InterPro" id="IPR018294">
    <property type="entry name" value="ISPD_synthase_CS"/>
</dbReference>
<dbReference type="InterPro" id="IPR029044">
    <property type="entry name" value="Nucleotide-diphossugar_trans"/>
</dbReference>
<dbReference type="NCBIfam" id="TIGR00453">
    <property type="entry name" value="ispD"/>
    <property type="match status" value="1"/>
</dbReference>
<dbReference type="PANTHER" id="PTHR32125">
    <property type="entry name" value="2-C-METHYL-D-ERYTHRITOL 4-PHOSPHATE CYTIDYLYLTRANSFERASE, CHLOROPLASTIC"/>
    <property type="match status" value="1"/>
</dbReference>
<dbReference type="PANTHER" id="PTHR32125:SF4">
    <property type="entry name" value="2-C-METHYL-D-ERYTHRITOL 4-PHOSPHATE CYTIDYLYLTRANSFERASE, CHLOROPLASTIC"/>
    <property type="match status" value="1"/>
</dbReference>
<dbReference type="Pfam" id="PF01128">
    <property type="entry name" value="IspD"/>
    <property type="match status" value="1"/>
</dbReference>
<dbReference type="SUPFAM" id="SSF53448">
    <property type="entry name" value="Nucleotide-diphospho-sugar transferases"/>
    <property type="match status" value="1"/>
</dbReference>
<dbReference type="PROSITE" id="PS01295">
    <property type="entry name" value="ISPD"/>
    <property type="match status" value="1"/>
</dbReference>
<gene>
    <name evidence="1" type="primary">ispD</name>
    <name type="ordered locus">CF0845</name>
</gene>
<evidence type="ECO:0000255" key="1">
    <source>
        <dbReference type="HAMAP-Rule" id="MF_00108"/>
    </source>
</evidence>
<reference key="1">
    <citation type="journal article" date="2006" name="DNA Res.">
        <title>Genome sequence of the cat pathogen, Chlamydophila felis.</title>
        <authorList>
            <person name="Azuma Y."/>
            <person name="Hirakawa H."/>
            <person name="Yamashita A."/>
            <person name="Cai Y."/>
            <person name="Rahman M.A."/>
            <person name="Suzuki H."/>
            <person name="Mitaku S."/>
            <person name="Toh H."/>
            <person name="Goto S."/>
            <person name="Murakami T."/>
            <person name="Sugi K."/>
            <person name="Hayashi H."/>
            <person name="Fukushi H."/>
            <person name="Hattori M."/>
            <person name="Kuhara S."/>
            <person name="Shirai M."/>
        </authorList>
    </citation>
    <scope>NUCLEOTIDE SEQUENCE [LARGE SCALE GENOMIC DNA]</scope>
    <source>
        <strain>Fe/C-56</strain>
    </source>
</reference>